<accession>Q9QUL7</accession>
<proteinExistence type="evidence at transcript level"/>
<reference key="1">
    <citation type="journal article" date="1999" name="J. Biol. Chem.">
        <title>Identification of a new member of the tryptase family of mouse and human mast cell proteases which possesses a novel COOH-terminal hydrophobic extension.</title>
        <authorList>
            <person name="Wong G.W."/>
            <person name="Tang Y."/>
            <person name="Feyfant E."/>
            <person name="Sali A."/>
            <person name="Li L."/>
            <person name="Li Y."/>
            <person name="Huang C."/>
            <person name="Friend D.S."/>
            <person name="Krilis S.A."/>
            <person name="Stevens R.L."/>
        </authorList>
    </citation>
    <scope>NUCLEOTIDE SEQUENCE [GENOMIC DNA / MRNA]</scope>
    <source>
        <strain>129/Sv</strain>
        <strain>BALB/cJ</strain>
    </source>
</reference>
<reference key="2">
    <citation type="journal article" date="2004" name="Genome Res.">
        <title>The status, quality, and expansion of the NIH full-length cDNA project: the Mammalian Gene Collection (MGC).</title>
        <authorList>
            <consortium name="The MGC Project Team"/>
        </authorList>
    </citation>
    <scope>NUCLEOTIDE SEQUENCE [LARGE SCALE MRNA]</scope>
    <source>
        <strain>FVB/N</strain>
        <tissue>Colon</tissue>
    </source>
</reference>
<organism>
    <name type="scientific">Mus musculus</name>
    <name type="common">Mouse</name>
    <dbReference type="NCBI Taxonomy" id="10090"/>
    <lineage>
        <taxon>Eukaryota</taxon>
        <taxon>Metazoa</taxon>
        <taxon>Chordata</taxon>
        <taxon>Craniata</taxon>
        <taxon>Vertebrata</taxon>
        <taxon>Euteleostomi</taxon>
        <taxon>Mammalia</taxon>
        <taxon>Eutheria</taxon>
        <taxon>Euarchontoglires</taxon>
        <taxon>Glires</taxon>
        <taxon>Rodentia</taxon>
        <taxon>Myomorpha</taxon>
        <taxon>Muroidea</taxon>
        <taxon>Muridae</taxon>
        <taxon>Murinae</taxon>
        <taxon>Mus</taxon>
        <taxon>Mus</taxon>
    </lineage>
</organism>
<gene>
    <name type="primary">Tpsg1</name>
    <name type="synonym">Tmt</name>
</gene>
<feature type="signal peptide" evidence="2">
    <location>
        <begin position="1"/>
        <end position="16"/>
    </location>
</feature>
<feature type="chain" id="PRO_0000027501" description="Tryptase gamma">
    <location>
        <begin position="17"/>
        <end position="311"/>
    </location>
</feature>
<feature type="chain" id="PRO_0000027502" description="Tryptase gamma light chain">
    <location>
        <begin position="17"/>
        <end position="28"/>
    </location>
</feature>
<feature type="chain" id="PRO_0000027503" description="Tryptase gamma heavy chain">
    <location>
        <begin position="30"/>
        <end position="311"/>
    </location>
</feature>
<feature type="transmembrane region" description="Helical" evidence="2">
    <location>
        <begin position="277"/>
        <end position="297"/>
    </location>
</feature>
<feature type="domain" description="Peptidase S1" evidence="3">
    <location>
        <begin position="30"/>
        <end position="262"/>
    </location>
</feature>
<feature type="active site" description="Charge relay system" evidence="1">
    <location>
        <position position="70"/>
    </location>
</feature>
<feature type="active site" description="Charge relay system" evidence="1">
    <location>
        <position position="117"/>
    </location>
</feature>
<feature type="active site" description="Charge relay system" evidence="1">
    <location>
        <position position="214"/>
    </location>
</feature>
<feature type="glycosylation site" description="N-linked (GlcNAc...) asparagine" evidence="2">
    <location>
        <position position="77"/>
    </location>
</feature>
<feature type="glycosylation site" description="N-linked (GlcNAc...) asparagine" evidence="2">
    <location>
        <position position="192"/>
    </location>
</feature>
<feature type="disulfide bond" description="Interchain (between light and heavy chains)" evidence="3">
    <location>
        <begin position="18"/>
        <end position="137"/>
    </location>
</feature>
<feature type="disulfide bond" evidence="3">
    <location>
        <begin position="55"/>
        <end position="71"/>
    </location>
</feature>
<feature type="disulfide bond" evidence="3">
    <location>
        <begin position="151"/>
        <end position="220"/>
    </location>
</feature>
<feature type="disulfide bond" evidence="3">
    <location>
        <begin position="184"/>
        <end position="202"/>
    </location>
</feature>
<feature type="disulfide bond" evidence="3">
    <location>
        <begin position="210"/>
        <end position="238"/>
    </location>
</feature>
<protein>
    <recommendedName>
        <fullName>Tryptase gamma</fullName>
        <ecNumber>3.4.21.-</ecNumber>
    </recommendedName>
    <alternativeName>
        <fullName>Transmembrane tryptase</fullName>
    </alternativeName>
    <component>
        <recommendedName>
            <fullName>Tryptase gamma light chain</fullName>
        </recommendedName>
    </component>
    <component>
        <recommendedName>
            <fullName>Tryptase gamma heavy chain</fullName>
        </recommendedName>
    </component>
</protein>
<evidence type="ECO:0000250" key="1"/>
<evidence type="ECO:0000255" key="2"/>
<evidence type="ECO:0000255" key="3">
    <source>
        <dbReference type="PROSITE-ProRule" id="PRU00274"/>
    </source>
</evidence>
<evidence type="ECO:0000305" key="4"/>
<sequence>MALGPNCGILLFLAVSGCGHPQVSNSGSRIVGGHAAPAGTWPWQASLRLHKVHVCGGSLLSPEWVLTAAHCFSGSVNSSDYQVHLGELTVTLSPHFSTVKRIIMYTGSPGPPGSSGDIALVQLSSPVALSSQVQPVCLPEASADFYPGMQCWVTGWGYTGEGEPLKPPYNLQEAKVSVVDVKTCSQAYNSPNGSLIQPDMLCARGPGDACQDDSGGPLVCQVAGTWQQAGVVSWGEGCGRPDRPGVYARVTAYVNWIHHHIPEAGGSGMQGLPWAPLLAALFWPSLFLLLVSGVLMAKYWLSSPSHAASEL</sequence>
<dbReference type="EC" id="3.4.21.-"/>
<dbReference type="EMBL" id="AF175760">
    <property type="protein sequence ID" value="AAF03698.1"/>
    <property type="molecule type" value="Genomic_DNA"/>
</dbReference>
<dbReference type="EMBL" id="AF175523">
    <property type="protein sequence ID" value="AAF03696.1"/>
    <property type="molecule type" value="mRNA"/>
</dbReference>
<dbReference type="EMBL" id="BC019974">
    <property type="protein sequence ID" value="AAH19974.1"/>
    <property type="molecule type" value="mRNA"/>
</dbReference>
<dbReference type="EMBL" id="BC052325">
    <property type="protein sequence ID" value="AAH52325.1"/>
    <property type="molecule type" value="mRNA"/>
</dbReference>
<dbReference type="CCDS" id="CCDS28518.1"/>
<dbReference type="SMR" id="Q9QUL7"/>
<dbReference type="FunCoup" id="Q9QUL7">
    <property type="interactions" value="136"/>
</dbReference>
<dbReference type="MEROPS" id="S01.028"/>
<dbReference type="GlyCosmos" id="Q9QUL7">
    <property type="glycosylation" value="2 sites, No reported glycans"/>
</dbReference>
<dbReference type="GlyGen" id="Q9QUL7">
    <property type="glycosylation" value="2 sites"/>
</dbReference>
<dbReference type="PhosphoSitePlus" id="Q9QUL7"/>
<dbReference type="PaxDb" id="10090-ENSMUSP00000024999"/>
<dbReference type="UCSC" id="uc008bat.1">
    <property type="organism name" value="mouse"/>
</dbReference>
<dbReference type="AGR" id="MGI:1349391"/>
<dbReference type="MGI" id="MGI:1349391">
    <property type="gene designation" value="Tpsg1"/>
</dbReference>
<dbReference type="eggNOG" id="KOG3627">
    <property type="taxonomic scope" value="Eukaryota"/>
</dbReference>
<dbReference type="InParanoid" id="Q9QUL7"/>
<dbReference type="OrthoDB" id="93664at2759"/>
<dbReference type="PhylomeDB" id="Q9QUL7"/>
<dbReference type="ChiTaRS" id="Tpsg1">
    <property type="organism name" value="mouse"/>
</dbReference>
<dbReference type="PRO" id="PR:Q9QUL7"/>
<dbReference type="Proteomes" id="UP000000589">
    <property type="component" value="Unplaced"/>
</dbReference>
<dbReference type="RNAct" id="Q9QUL7">
    <property type="molecule type" value="protein"/>
</dbReference>
<dbReference type="GO" id="GO:0016020">
    <property type="term" value="C:membrane"/>
    <property type="evidence" value="ECO:0007669"/>
    <property type="project" value="UniProtKB-SubCell"/>
</dbReference>
<dbReference type="GO" id="GO:0004252">
    <property type="term" value="F:serine-type endopeptidase activity"/>
    <property type="evidence" value="ECO:0007669"/>
    <property type="project" value="InterPro"/>
</dbReference>
<dbReference type="GO" id="GO:0008236">
    <property type="term" value="F:serine-type peptidase activity"/>
    <property type="evidence" value="ECO:0000250"/>
    <property type="project" value="MGI"/>
</dbReference>
<dbReference type="GO" id="GO:0006508">
    <property type="term" value="P:proteolysis"/>
    <property type="evidence" value="ECO:0007669"/>
    <property type="project" value="UniProtKB-KW"/>
</dbReference>
<dbReference type="CDD" id="cd00190">
    <property type="entry name" value="Tryp_SPc"/>
    <property type="match status" value="1"/>
</dbReference>
<dbReference type="FunFam" id="2.40.10.10:FF:000039">
    <property type="entry name" value="Brain-specific serine protease 4"/>
    <property type="match status" value="1"/>
</dbReference>
<dbReference type="Gene3D" id="2.40.10.10">
    <property type="entry name" value="Trypsin-like serine proteases"/>
    <property type="match status" value="2"/>
</dbReference>
<dbReference type="InterPro" id="IPR009003">
    <property type="entry name" value="Peptidase_S1_PA"/>
</dbReference>
<dbReference type="InterPro" id="IPR043504">
    <property type="entry name" value="Peptidase_S1_PA_chymotrypsin"/>
</dbReference>
<dbReference type="InterPro" id="IPR001314">
    <property type="entry name" value="Peptidase_S1A"/>
</dbReference>
<dbReference type="InterPro" id="IPR001254">
    <property type="entry name" value="Trypsin_dom"/>
</dbReference>
<dbReference type="InterPro" id="IPR018114">
    <property type="entry name" value="TRYPSIN_HIS"/>
</dbReference>
<dbReference type="PANTHER" id="PTHR24253:SF170">
    <property type="entry name" value="PEPTIDASE S1 DOMAIN-CONTAINING PROTEIN"/>
    <property type="match status" value="1"/>
</dbReference>
<dbReference type="PANTHER" id="PTHR24253">
    <property type="entry name" value="TRANSMEMBRANE PROTEASE SERINE"/>
    <property type="match status" value="1"/>
</dbReference>
<dbReference type="Pfam" id="PF00089">
    <property type="entry name" value="Trypsin"/>
    <property type="match status" value="1"/>
</dbReference>
<dbReference type="PRINTS" id="PR00722">
    <property type="entry name" value="CHYMOTRYPSIN"/>
</dbReference>
<dbReference type="SMART" id="SM00020">
    <property type="entry name" value="Tryp_SPc"/>
    <property type="match status" value="1"/>
</dbReference>
<dbReference type="SUPFAM" id="SSF50494">
    <property type="entry name" value="Trypsin-like serine proteases"/>
    <property type="match status" value="1"/>
</dbReference>
<dbReference type="PROSITE" id="PS50240">
    <property type="entry name" value="TRYPSIN_DOM"/>
    <property type="match status" value="1"/>
</dbReference>
<dbReference type="PROSITE" id="PS00134">
    <property type="entry name" value="TRYPSIN_HIS"/>
    <property type="match status" value="1"/>
</dbReference>
<name>TRYG1_MOUSE</name>
<comment type="subcellular location">
    <subcellularLocation>
        <location evidence="4">Membrane</location>
        <topology evidence="4">Single-pass membrane protein</topology>
    </subcellularLocation>
</comment>
<comment type="tissue specificity">
    <text>Expressed in many tissues.</text>
</comment>
<comment type="similarity">
    <text evidence="3">Belongs to the peptidase S1 family. Tryptase subfamily.</text>
</comment>
<keyword id="KW-1015">Disulfide bond</keyword>
<keyword id="KW-0325">Glycoprotein</keyword>
<keyword id="KW-0378">Hydrolase</keyword>
<keyword id="KW-0472">Membrane</keyword>
<keyword id="KW-0645">Protease</keyword>
<keyword id="KW-1185">Reference proteome</keyword>
<keyword id="KW-0720">Serine protease</keyword>
<keyword id="KW-0732">Signal</keyword>
<keyword id="KW-0812">Transmembrane</keyword>
<keyword id="KW-1133">Transmembrane helix</keyword>
<keyword id="KW-0865">Zymogen</keyword>